<name>MAFA_DANRE</name>
<keyword id="KW-0217">Developmental protein</keyword>
<keyword id="KW-0238">DNA-binding</keyword>
<keyword id="KW-0539">Nucleus</keyword>
<keyword id="KW-1185">Reference proteome</keyword>
<keyword id="KW-0804">Transcription</keyword>
<keyword id="KW-0805">Transcription regulation</keyword>
<evidence type="ECO:0000250" key="1"/>
<evidence type="ECO:0000255" key="2">
    <source>
        <dbReference type="PROSITE-ProRule" id="PRU00978"/>
    </source>
</evidence>
<evidence type="ECO:0000256" key="3">
    <source>
        <dbReference type="SAM" id="MobiDB-lite"/>
    </source>
</evidence>
<evidence type="ECO:0000269" key="4">
    <source>
    </source>
</evidence>
<evidence type="ECO:0000303" key="5">
    <source>
    </source>
</evidence>
<evidence type="ECO:0000305" key="6"/>
<reference key="1">
    <citation type="journal article" date="2001" name="J. Biochem.">
        <title>Isolation, characterization, and expression analysis of zebrafish large Mafs.</title>
        <authorList>
            <person name="Kajihara M."/>
            <person name="Kawauchi S."/>
            <person name="Kobayashi M."/>
            <person name="Ogino H."/>
            <person name="Takahashi S."/>
            <person name="Yasuda K."/>
        </authorList>
    </citation>
    <scope>NUCLEOTIDE SEQUENCE [MRNA]</scope>
    <scope>FUNCTION</scope>
    <scope>DEVELOPMENTAL STAGE</scope>
</reference>
<reference key="2">
    <citation type="submission" date="2007-02" db="EMBL/GenBank/DDBJ databases">
        <authorList>
            <consortium name="NIH - Zebrafish Gene Collection (ZGC) project"/>
        </authorList>
    </citation>
    <scope>NUCLEOTIDE SEQUENCE [LARGE SCALE MRNA]</scope>
    <source>
        <tissue>Embryo</tissue>
    </source>
</reference>
<protein>
    <recommendedName>
        <fullName>Transcription factor MafAa</fullName>
    </recommendedName>
    <alternativeName>
        <fullName evidence="5">Somite Maf1</fullName>
        <shortName>SMaf1</shortName>
    </alternativeName>
</protein>
<proteinExistence type="evidence at transcript level"/>
<accession>A3KMR8</accession>
<accession>Q98UK3</accession>
<sequence>MATDLAMSAELPNSPLAIEYVNDFDLMKFEIKKEPPEADRYCHRLPPGSLSSTPISTPCSSVPSSPSFCAPSPGSQPGQNLVNGVNNNNNNSGNGNNNTQGSSGKPQMEDLYWIPNYQHHISPEALNLTPEDAVEALIGNAHHHHHHHHHQPYEGFRGQQYVGEDLSAATNGHHHPVHHHHHHHGHHAHARLEDRFSDEQLVSMTVRELNRQLRGFSKEEVIRLKQKRRTLKNRGYAQSCRYKRVQQRHMLESEKCTLQSQVEQLKQDVARLIKERDLYKEKYEKLASRAFNGGGNTRDPSSGNHVKTTSTDFFM</sequence>
<organism>
    <name type="scientific">Danio rerio</name>
    <name type="common">Zebrafish</name>
    <name type="synonym">Brachydanio rerio</name>
    <dbReference type="NCBI Taxonomy" id="7955"/>
    <lineage>
        <taxon>Eukaryota</taxon>
        <taxon>Metazoa</taxon>
        <taxon>Chordata</taxon>
        <taxon>Craniata</taxon>
        <taxon>Vertebrata</taxon>
        <taxon>Euteleostomi</taxon>
        <taxon>Actinopterygii</taxon>
        <taxon>Neopterygii</taxon>
        <taxon>Teleostei</taxon>
        <taxon>Ostariophysi</taxon>
        <taxon>Cypriniformes</taxon>
        <taxon>Danionidae</taxon>
        <taxon>Danioninae</taxon>
        <taxon>Danio</taxon>
    </lineage>
</organism>
<dbReference type="EMBL" id="AB006324">
    <property type="protein sequence ID" value="BAB21104.2"/>
    <property type="molecule type" value="mRNA"/>
</dbReference>
<dbReference type="EMBL" id="BC133072">
    <property type="protein sequence ID" value="AAI33073.1"/>
    <property type="molecule type" value="mRNA"/>
</dbReference>
<dbReference type="PIR" id="JC7572">
    <property type="entry name" value="JC7572"/>
</dbReference>
<dbReference type="RefSeq" id="NP_001076409.1">
    <property type="nucleotide sequence ID" value="NM_001082940.2"/>
</dbReference>
<dbReference type="SMR" id="A3KMR8"/>
<dbReference type="FunCoup" id="A3KMR8">
    <property type="interactions" value="110"/>
</dbReference>
<dbReference type="STRING" id="7955.ENSDARP00000064832"/>
<dbReference type="PaxDb" id="7955-ENSDARP00000064832"/>
<dbReference type="Ensembl" id="ENSDART00000064833">
    <property type="protein sequence ID" value="ENSDARP00000064832"/>
    <property type="gene ID" value="ENSDARG00000044155"/>
</dbReference>
<dbReference type="GeneID" id="100000492"/>
<dbReference type="KEGG" id="dre:100000492"/>
<dbReference type="AGR" id="ZFIN:ZDB-GENE-010605-3"/>
<dbReference type="CTD" id="100000492"/>
<dbReference type="ZFIN" id="ZDB-GENE-010605-3">
    <property type="gene designation" value="mafaa"/>
</dbReference>
<dbReference type="eggNOG" id="KOG4196">
    <property type="taxonomic scope" value="Eukaryota"/>
</dbReference>
<dbReference type="HOGENOM" id="CLU_063062_0_0_1"/>
<dbReference type="InParanoid" id="A3KMR8"/>
<dbReference type="OMA" id="SYQHHLN"/>
<dbReference type="OrthoDB" id="5974330at2759"/>
<dbReference type="PhylomeDB" id="A3KMR8"/>
<dbReference type="TreeFam" id="TF325689"/>
<dbReference type="PRO" id="PR:A3KMR8"/>
<dbReference type="Proteomes" id="UP000000437">
    <property type="component" value="Chromosome 6"/>
</dbReference>
<dbReference type="Bgee" id="ENSDARG00000044155">
    <property type="expression patterns" value="Expressed in muscle tissue and 17 other cell types or tissues"/>
</dbReference>
<dbReference type="ExpressionAtlas" id="A3KMR8">
    <property type="expression patterns" value="baseline"/>
</dbReference>
<dbReference type="GO" id="GO:0005634">
    <property type="term" value="C:nucleus"/>
    <property type="evidence" value="ECO:0000318"/>
    <property type="project" value="GO_Central"/>
</dbReference>
<dbReference type="GO" id="GO:0000981">
    <property type="term" value="F:DNA-binding transcription factor activity, RNA polymerase II-specific"/>
    <property type="evidence" value="ECO:0000318"/>
    <property type="project" value="GO_Central"/>
</dbReference>
<dbReference type="GO" id="GO:0000978">
    <property type="term" value="F:RNA polymerase II cis-regulatory region sequence-specific DNA binding"/>
    <property type="evidence" value="ECO:0000318"/>
    <property type="project" value="GO_Central"/>
</dbReference>
<dbReference type="GO" id="GO:0043565">
    <property type="term" value="F:sequence-specific DNA binding"/>
    <property type="evidence" value="ECO:0000314"/>
    <property type="project" value="ZFIN"/>
</dbReference>
<dbReference type="GO" id="GO:0006357">
    <property type="term" value="P:regulation of transcription by RNA polymerase II"/>
    <property type="evidence" value="ECO:0000318"/>
    <property type="project" value="GO_Central"/>
</dbReference>
<dbReference type="CDD" id="cd14718">
    <property type="entry name" value="bZIP_Maf_large"/>
    <property type="match status" value="1"/>
</dbReference>
<dbReference type="FunFam" id="1.20.5.170:FF:000016">
    <property type="entry name" value="MAF bZIP transcription factor"/>
    <property type="match status" value="1"/>
</dbReference>
<dbReference type="Gene3D" id="1.20.5.170">
    <property type="match status" value="1"/>
</dbReference>
<dbReference type="InterPro" id="IPR004827">
    <property type="entry name" value="bZIP"/>
</dbReference>
<dbReference type="InterPro" id="IPR004826">
    <property type="entry name" value="bZIP_Maf"/>
</dbReference>
<dbReference type="InterPro" id="IPR046347">
    <property type="entry name" value="bZIP_sf"/>
</dbReference>
<dbReference type="InterPro" id="IPR013592">
    <property type="entry name" value="Maf_TF_N"/>
</dbReference>
<dbReference type="InterPro" id="IPR008917">
    <property type="entry name" value="TF_DNA-bd_sf"/>
</dbReference>
<dbReference type="InterPro" id="IPR024874">
    <property type="entry name" value="Transcription_factor_Maf_fam"/>
</dbReference>
<dbReference type="PANTHER" id="PTHR10129">
    <property type="entry name" value="TRANSCRIPTION FACTOR MAF"/>
    <property type="match status" value="1"/>
</dbReference>
<dbReference type="PANTHER" id="PTHR10129:SF30">
    <property type="entry name" value="TRANSCRIPTION FACTOR MAFA"/>
    <property type="match status" value="1"/>
</dbReference>
<dbReference type="Pfam" id="PF03131">
    <property type="entry name" value="bZIP_Maf"/>
    <property type="match status" value="1"/>
</dbReference>
<dbReference type="Pfam" id="PF08383">
    <property type="entry name" value="Maf_N"/>
    <property type="match status" value="1"/>
</dbReference>
<dbReference type="SMART" id="SM00338">
    <property type="entry name" value="BRLZ"/>
    <property type="match status" value="1"/>
</dbReference>
<dbReference type="SUPFAM" id="SSF47454">
    <property type="entry name" value="A DNA-binding domain in eukaryotic transcription factors"/>
    <property type="match status" value="1"/>
</dbReference>
<dbReference type="SUPFAM" id="SSF57959">
    <property type="entry name" value="Leucine zipper domain"/>
    <property type="match status" value="1"/>
</dbReference>
<dbReference type="PROSITE" id="PS50217">
    <property type="entry name" value="BZIP"/>
    <property type="match status" value="1"/>
</dbReference>
<feature type="chain" id="PRO_0000320278" description="Transcription factor MafAa">
    <location>
        <begin position="1"/>
        <end position="315"/>
    </location>
</feature>
<feature type="domain" description="bZIP" evidence="2">
    <location>
        <begin position="223"/>
        <end position="286"/>
    </location>
</feature>
<feature type="region of interest" description="Disordered" evidence="3">
    <location>
        <begin position="52"/>
        <end position="108"/>
    </location>
</feature>
<feature type="region of interest" description="Disordered" evidence="3">
    <location>
        <begin position="169"/>
        <end position="191"/>
    </location>
</feature>
<feature type="region of interest" description="Basic motif">
    <location>
        <begin position="223"/>
        <end position="248"/>
    </location>
</feature>
<feature type="region of interest" description="Interaction with DNA" evidence="1">
    <location>
        <begin position="229"/>
        <end position="243"/>
    </location>
</feature>
<feature type="region of interest" description="Leucine-zipper">
    <location>
        <begin position="251"/>
        <end position="272"/>
    </location>
</feature>
<feature type="region of interest" description="Disordered" evidence="3">
    <location>
        <begin position="290"/>
        <end position="315"/>
    </location>
</feature>
<feature type="compositionally biased region" description="Low complexity" evidence="3">
    <location>
        <begin position="52"/>
        <end position="104"/>
    </location>
</feature>
<feature type="compositionally biased region" description="Basic residues" evidence="3">
    <location>
        <begin position="172"/>
        <end position="189"/>
    </location>
</feature>
<feature type="compositionally biased region" description="Polar residues" evidence="3">
    <location>
        <begin position="298"/>
        <end position="315"/>
    </location>
</feature>
<feature type="sequence conflict" description="In Ref. 1; BAB21104." evidence="6" ref="1">
    <original>E</original>
    <variation>K</variation>
    <location>
        <position position="154"/>
    </location>
</feature>
<feature type="sequence conflict" description="In Ref. 1; BAB21104." evidence="6" ref="1">
    <original>ED</original>
    <variation>KN</variation>
    <location>
        <begin position="164"/>
        <end position="165"/>
    </location>
</feature>
<comment type="function">
    <text evidence="4">Transcription factor, possibly involved in transcription regulation during lens development, including that of crystallin genes (PubMed:11134968). Specifically binds to the alphaCE2 enhancer element of crystallin gene (PubMed:11134968).</text>
</comment>
<comment type="subcellular location">
    <subcellularLocation>
        <location evidence="2">Nucleus</location>
    </subcellularLocation>
</comment>
<comment type="developmental stage">
    <text evidence="4">Detected first in each somite at the 7-somite stage (12 hpf). By 24 hpf, expressed in each newly formed somite. Expression persists at low levels in each maturing somite until after 35 hpf. At 20 hpf, detected in the hindbrain and in olfactory cells.</text>
</comment>
<comment type="similarity">
    <text evidence="6">Belongs to the bZIP family. Maf subfamily.</text>
</comment>
<gene>
    <name type="primary">mafaa</name>
    <name type="synonym">mafa</name>
    <name type="synonym">mafl</name>
</gene>